<sequence length="420" mass="44453">MTQRRVAITGIEVLAPGGLGRKEFWQLLSEGRTATRGITFFDPAPFRSKVAAEADFCGLENGLSPQEVRRMDRAAQFAVVTARAVEDSGAELAAHPPHRIGVVVGSAVGATMGLDNEYRVVSDGGRLDLVDHRYAVPHLYNYLVPSSFAAEVAWAVGAEGPSTVVSTGCTSGIDAVGIAVELVREGSVDVMVAGAVDAPISPIPCVLDAIKATTPRHDAPATASRPFDSTRNGFVLGEGAAFFVLEELHSARRRGAHIYAEIAGYATRSNAYHMTGLRDGAEMAEAIRLALDEARLNPEQVDYINAHGSGTKQNDRHETAAFKKALGEHAYRTPVSSIKSMVGHSLGAIGSIEIAASALAMEYDVVPPTANLHTPDPECDLDYVPLTARDQRVDSVLTVGSGFGGFQSAMVLTSAQRSTV</sequence>
<keyword id="KW-0012">Acyltransferase</keyword>
<keyword id="KW-0045">Antibiotic biosynthesis</keyword>
<keyword id="KW-0808">Transferase</keyword>
<feature type="chain" id="PRO_0000180335" description="Putative polyketide beta-ketoacyl synthase 1">
    <location>
        <begin position="1"/>
        <end position="420"/>
    </location>
</feature>
<feature type="domain" description="Ketosynthase family 3 (KS3)" evidence="1">
    <location>
        <begin position="3"/>
        <end position="414"/>
    </location>
</feature>
<feature type="active site" description="For beta-ketoacyl synthase activity" evidence="1">
    <location>
        <position position="169"/>
    </location>
</feature>
<feature type="active site" description="For beta-ketoacyl synthase activity" evidence="1">
    <location>
        <position position="307"/>
    </location>
</feature>
<feature type="active site" description="For beta-ketoacyl synthase activity" evidence="1">
    <location>
        <position position="344"/>
    </location>
</feature>
<evidence type="ECO:0000255" key="1">
    <source>
        <dbReference type="PROSITE-ProRule" id="PRU01348"/>
    </source>
</evidence>
<evidence type="ECO:0000305" key="2"/>
<proteinExistence type="inferred from homology"/>
<protein>
    <recommendedName>
        <fullName>Putative polyketide beta-ketoacyl synthase 1</fullName>
        <ecNumber>2.3.1.-</ecNumber>
    </recommendedName>
    <alternativeName>
        <fullName>ORF1</fullName>
    </alternativeName>
</protein>
<dbReference type="EC" id="2.3.1.-"/>
<dbReference type="EMBL" id="Z11511">
    <property type="protein sequence ID" value="CAA77596.1"/>
    <property type="molecule type" value="Genomic_DNA"/>
</dbReference>
<dbReference type="PIR" id="S25076">
    <property type="entry name" value="S25076"/>
</dbReference>
<dbReference type="SMR" id="P41175"/>
<dbReference type="UniPathway" id="UPA00178"/>
<dbReference type="GO" id="GO:0005829">
    <property type="term" value="C:cytosol"/>
    <property type="evidence" value="ECO:0007669"/>
    <property type="project" value="TreeGrafter"/>
</dbReference>
<dbReference type="GO" id="GO:0004315">
    <property type="term" value="F:3-oxoacyl-[acyl-carrier-protein] synthase activity"/>
    <property type="evidence" value="ECO:0007669"/>
    <property type="project" value="InterPro"/>
</dbReference>
<dbReference type="GO" id="GO:0017000">
    <property type="term" value="P:antibiotic biosynthetic process"/>
    <property type="evidence" value="ECO:0007669"/>
    <property type="project" value="UniProtKB-KW"/>
</dbReference>
<dbReference type="GO" id="GO:0006633">
    <property type="term" value="P:fatty acid biosynthetic process"/>
    <property type="evidence" value="ECO:0007669"/>
    <property type="project" value="InterPro"/>
</dbReference>
<dbReference type="CDD" id="cd00834">
    <property type="entry name" value="KAS_I_II"/>
    <property type="match status" value="1"/>
</dbReference>
<dbReference type="FunFam" id="3.40.47.10:FF:000029">
    <property type="entry name" value="3-oxoacyl-[acyl-carrier-protein] synthase 1"/>
    <property type="match status" value="1"/>
</dbReference>
<dbReference type="Gene3D" id="3.40.47.10">
    <property type="match status" value="2"/>
</dbReference>
<dbReference type="InterPro" id="IPR000794">
    <property type="entry name" value="Beta-ketoacyl_synthase"/>
</dbReference>
<dbReference type="InterPro" id="IPR018201">
    <property type="entry name" value="Ketoacyl_synth_AS"/>
</dbReference>
<dbReference type="InterPro" id="IPR014031">
    <property type="entry name" value="Ketoacyl_synth_C"/>
</dbReference>
<dbReference type="InterPro" id="IPR014030">
    <property type="entry name" value="Ketoacyl_synth_N"/>
</dbReference>
<dbReference type="InterPro" id="IPR020841">
    <property type="entry name" value="PKS_Beta-ketoAc_synthase_dom"/>
</dbReference>
<dbReference type="InterPro" id="IPR016039">
    <property type="entry name" value="Thiolase-like"/>
</dbReference>
<dbReference type="PANTHER" id="PTHR11712:SF336">
    <property type="entry name" value="3-OXOACYL-[ACYL-CARRIER-PROTEIN] SYNTHASE, MITOCHONDRIAL"/>
    <property type="match status" value="1"/>
</dbReference>
<dbReference type="PANTHER" id="PTHR11712">
    <property type="entry name" value="POLYKETIDE SYNTHASE-RELATED"/>
    <property type="match status" value="1"/>
</dbReference>
<dbReference type="Pfam" id="PF00109">
    <property type="entry name" value="ketoacyl-synt"/>
    <property type="match status" value="1"/>
</dbReference>
<dbReference type="Pfam" id="PF02801">
    <property type="entry name" value="Ketoacyl-synt_C"/>
    <property type="match status" value="1"/>
</dbReference>
<dbReference type="SMART" id="SM00825">
    <property type="entry name" value="PKS_KS"/>
    <property type="match status" value="1"/>
</dbReference>
<dbReference type="SUPFAM" id="SSF53901">
    <property type="entry name" value="Thiolase-like"/>
    <property type="match status" value="2"/>
</dbReference>
<dbReference type="PROSITE" id="PS00606">
    <property type="entry name" value="KS3_1"/>
    <property type="match status" value="1"/>
</dbReference>
<dbReference type="PROSITE" id="PS52004">
    <property type="entry name" value="KS3_2"/>
    <property type="match status" value="1"/>
</dbReference>
<organism>
    <name type="scientific">Streptomyces virginiae</name>
    <name type="common">Streptomyces cinnamonensis</name>
    <dbReference type="NCBI Taxonomy" id="1961"/>
    <lineage>
        <taxon>Bacteria</taxon>
        <taxon>Bacillati</taxon>
        <taxon>Actinomycetota</taxon>
        <taxon>Actinomycetes</taxon>
        <taxon>Kitasatosporales</taxon>
        <taxon>Streptomycetaceae</taxon>
        <taxon>Streptomyces</taxon>
    </lineage>
</organism>
<accession>P41175</accession>
<comment type="pathway">
    <text>Antifungal biosynthesis; monensin biosynthesis.</text>
</comment>
<comment type="similarity">
    <text evidence="2">Belongs to the thiolase-like superfamily. Beta-ketoacyl-ACP synthases family.</text>
</comment>
<name>KAS1_STRVG</name>
<reference key="1">
    <citation type="journal article" date="1992" name="Mol. Gen. Genet.">
        <title>Characterisation of actI-homologous DNA encoding polyketide synthase genes from the monensin producer Streptomyces cinnamonensis.</title>
        <authorList>
            <person name="Arrowsmith T.J."/>
            <person name="Malpartida F."/>
            <person name="Sherman D.H."/>
            <person name="Birch A."/>
            <person name="Hopwood D.A."/>
            <person name="Robinson J.A."/>
        </authorList>
    </citation>
    <scope>NUCLEOTIDE SEQUENCE [GENOMIC DNA]</scope>
    <source>
        <strain>A3823.5</strain>
    </source>
</reference>